<feature type="chain" id="PRO_0000170521" description="Guanylate kinase">
    <location>
        <begin position="1"/>
        <end position="195"/>
    </location>
</feature>
<feature type="domain" description="Guanylate kinase-like" evidence="1">
    <location>
        <begin position="10"/>
        <end position="189"/>
    </location>
</feature>
<feature type="binding site" evidence="1">
    <location>
        <begin position="17"/>
        <end position="24"/>
    </location>
    <ligand>
        <name>ATP</name>
        <dbReference type="ChEBI" id="CHEBI:30616"/>
    </ligand>
</feature>
<sequence length="195" mass="21773">MSAEQVLDQGRLIVFSAPSGTGKSTVAKLVMERLGSLEFSVSATTRQMRAGERDGVDYHFLSREEFEKKIAENGFIEHEFFFGNFYGTLLDKTIDAIKAGHNLLFDLDVKGALNLKRIFGDQALLVFLKPPSMEELARRLQARDSESAEALKSRLERAEMELSHAGEFDFVVVNDDLGRTVDAVATRIAEFLPQP</sequence>
<dbReference type="EC" id="2.7.4.8" evidence="1"/>
<dbReference type="EMBL" id="AE006470">
    <property type="protein sequence ID" value="AAM71493.1"/>
    <property type="molecule type" value="Genomic_DNA"/>
</dbReference>
<dbReference type="RefSeq" id="NP_661151.1">
    <property type="nucleotide sequence ID" value="NC_002932.3"/>
</dbReference>
<dbReference type="RefSeq" id="WP_010931939.1">
    <property type="nucleotide sequence ID" value="NC_002932.3"/>
</dbReference>
<dbReference type="SMR" id="Q8KFS5"/>
<dbReference type="STRING" id="194439.CT0247"/>
<dbReference type="EnsemblBacteria" id="AAM71493">
    <property type="protein sequence ID" value="AAM71493"/>
    <property type="gene ID" value="CT0247"/>
</dbReference>
<dbReference type="KEGG" id="cte:CT0247"/>
<dbReference type="PATRIC" id="fig|194439.7.peg.239"/>
<dbReference type="eggNOG" id="COG0194">
    <property type="taxonomic scope" value="Bacteria"/>
</dbReference>
<dbReference type="HOGENOM" id="CLU_001715_1_1_10"/>
<dbReference type="OrthoDB" id="9808150at2"/>
<dbReference type="Proteomes" id="UP000001007">
    <property type="component" value="Chromosome"/>
</dbReference>
<dbReference type="GO" id="GO:0005829">
    <property type="term" value="C:cytosol"/>
    <property type="evidence" value="ECO:0007669"/>
    <property type="project" value="TreeGrafter"/>
</dbReference>
<dbReference type="GO" id="GO:0005524">
    <property type="term" value="F:ATP binding"/>
    <property type="evidence" value="ECO:0007669"/>
    <property type="project" value="UniProtKB-UniRule"/>
</dbReference>
<dbReference type="GO" id="GO:0004385">
    <property type="term" value="F:guanylate kinase activity"/>
    <property type="evidence" value="ECO:0007669"/>
    <property type="project" value="UniProtKB-UniRule"/>
</dbReference>
<dbReference type="CDD" id="cd00071">
    <property type="entry name" value="GMPK"/>
    <property type="match status" value="1"/>
</dbReference>
<dbReference type="FunFam" id="3.30.63.10:FF:000002">
    <property type="entry name" value="Guanylate kinase 1"/>
    <property type="match status" value="1"/>
</dbReference>
<dbReference type="Gene3D" id="3.30.63.10">
    <property type="entry name" value="Guanylate Kinase phosphate binding domain"/>
    <property type="match status" value="1"/>
</dbReference>
<dbReference type="Gene3D" id="3.40.50.300">
    <property type="entry name" value="P-loop containing nucleotide triphosphate hydrolases"/>
    <property type="match status" value="1"/>
</dbReference>
<dbReference type="HAMAP" id="MF_00328">
    <property type="entry name" value="Guanylate_kinase"/>
    <property type="match status" value="1"/>
</dbReference>
<dbReference type="InterPro" id="IPR008145">
    <property type="entry name" value="GK/Ca_channel_bsu"/>
</dbReference>
<dbReference type="InterPro" id="IPR008144">
    <property type="entry name" value="Guanylate_kin-like_dom"/>
</dbReference>
<dbReference type="InterPro" id="IPR017665">
    <property type="entry name" value="Guanylate_kinase"/>
</dbReference>
<dbReference type="InterPro" id="IPR020590">
    <property type="entry name" value="Guanylate_kinase_CS"/>
</dbReference>
<dbReference type="InterPro" id="IPR027417">
    <property type="entry name" value="P-loop_NTPase"/>
</dbReference>
<dbReference type="NCBIfam" id="TIGR03263">
    <property type="entry name" value="guanyl_kin"/>
    <property type="match status" value="1"/>
</dbReference>
<dbReference type="PANTHER" id="PTHR23117:SF13">
    <property type="entry name" value="GUANYLATE KINASE"/>
    <property type="match status" value="1"/>
</dbReference>
<dbReference type="PANTHER" id="PTHR23117">
    <property type="entry name" value="GUANYLATE KINASE-RELATED"/>
    <property type="match status" value="1"/>
</dbReference>
<dbReference type="Pfam" id="PF00625">
    <property type="entry name" value="Guanylate_kin"/>
    <property type="match status" value="1"/>
</dbReference>
<dbReference type="SMART" id="SM00072">
    <property type="entry name" value="GuKc"/>
    <property type="match status" value="1"/>
</dbReference>
<dbReference type="SUPFAM" id="SSF52540">
    <property type="entry name" value="P-loop containing nucleoside triphosphate hydrolases"/>
    <property type="match status" value="1"/>
</dbReference>
<dbReference type="PROSITE" id="PS00856">
    <property type="entry name" value="GUANYLATE_KINASE_1"/>
    <property type="match status" value="1"/>
</dbReference>
<dbReference type="PROSITE" id="PS50052">
    <property type="entry name" value="GUANYLATE_KINASE_2"/>
    <property type="match status" value="1"/>
</dbReference>
<keyword id="KW-0067">ATP-binding</keyword>
<keyword id="KW-0963">Cytoplasm</keyword>
<keyword id="KW-0418">Kinase</keyword>
<keyword id="KW-0547">Nucleotide-binding</keyword>
<keyword id="KW-1185">Reference proteome</keyword>
<keyword id="KW-0808">Transferase</keyword>
<evidence type="ECO:0000255" key="1">
    <source>
        <dbReference type="HAMAP-Rule" id="MF_00328"/>
    </source>
</evidence>
<accession>Q8KFS5</accession>
<reference key="1">
    <citation type="journal article" date="2002" name="Proc. Natl. Acad. Sci. U.S.A.">
        <title>The complete genome sequence of Chlorobium tepidum TLS, a photosynthetic, anaerobic, green-sulfur bacterium.</title>
        <authorList>
            <person name="Eisen J.A."/>
            <person name="Nelson K.E."/>
            <person name="Paulsen I.T."/>
            <person name="Heidelberg J.F."/>
            <person name="Wu M."/>
            <person name="Dodson R.J."/>
            <person name="DeBoy R.T."/>
            <person name="Gwinn M.L."/>
            <person name="Nelson W.C."/>
            <person name="Haft D.H."/>
            <person name="Hickey E.K."/>
            <person name="Peterson J.D."/>
            <person name="Durkin A.S."/>
            <person name="Kolonay J.F."/>
            <person name="Yang F."/>
            <person name="Holt I.E."/>
            <person name="Umayam L.A."/>
            <person name="Mason T.M."/>
            <person name="Brenner M."/>
            <person name="Shea T.P."/>
            <person name="Parksey D.S."/>
            <person name="Nierman W.C."/>
            <person name="Feldblyum T.V."/>
            <person name="Hansen C.L."/>
            <person name="Craven M.B."/>
            <person name="Radune D."/>
            <person name="Vamathevan J.J."/>
            <person name="Khouri H.M."/>
            <person name="White O."/>
            <person name="Gruber T.M."/>
            <person name="Ketchum K.A."/>
            <person name="Venter J.C."/>
            <person name="Tettelin H."/>
            <person name="Bryant D.A."/>
            <person name="Fraser C.M."/>
        </authorList>
    </citation>
    <scope>NUCLEOTIDE SEQUENCE [LARGE SCALE GENOMIC DNA]</scope>
    <source>
        <strain>ATCC 49652 / DSM 12025 / NBRC 103806 / TLS</strain>
    </source>
</reference>
<protein>
    <recommendedName>
        <fullName evidence="1">Guanylate kinase</fullName>
        <ecNumber evidence="1">2.7.4.8</ecNumber>
    </recommendedName>
    <alternativeName>
        <fullName evidence="1">GMP kinase</fullName>
    </alternativeName>
</protein>
<organism>
    <name type="scientific">Chlorobaculum tepidum (strain ATCC 49652 / DSM 12025 / NBRC 103806 / TLS)</name>
    <name type="common">Chlorobium tepidum</name>
    <dbReference type="NCBI Taxonomy" id="194439"/>
    <lineage>
        <taxon>Bacteria</taxon>
        <taxon>Pseudomonadati</taxon>
        <taxon>Chlorobiota</taxon>
        <taxon>Chlorobiia</taxon>
        <taxon>Chlorobiales</taxon>
        <taxon>Chlorobiaceae</taxon>
        <taxon>Chlorobaculum</taxon>
    </lineage>
</organism>
<name>KGUA_CHLTE</name>
<comment type="function">
    <text evidence="1">Essential for recycling GMP and indirectly, cGMP.</text>
</comment>
<comment type="catalytic activity">
    <reaction evidence="1">
        <text>GMP + ATP = GDP + ADP</text>
        <dbReference type="Rhea" id="RHEA:20780"/>
        <dbReference type="ChEBI" id="CHEBI:30616"/>
        <dbReference type="ChEBI" id="CHEBI:58115"/>
        <dbReference type="ChEBI" id="CHEBI:58189"/>
        <dbReference type="ChEBI" id="CHEBI:456216"/>
        <dbReference type="EC" id="2.7.4.8"/>
    </reaction>
</comment>
<comment type="subcellular location">
    <subcellularLocation>
        <location evidence="1">Cytoplasm</location>
    </subcellularLocation>
</comment>
<comment type="similarity">
    <text evidence="1">Belongs to the guanylate kinase family.</text>
</comment>
<proteinExistence type="inferred from homology"/>
<gene>
    <name evidence="1" type="primary">gmk</name>
    <name type="ordered locus">CT0247</name>
</gene>